<comment type="function">
    <text evidence="1 2 7">Serine/threonine protein kinase which acts as a downstream effector of the second messenger cGMP (PubMed:16325279). Controls the release of Ca(2+) from intracellular stores by regulating phosphoinositide biosynthesis. Ca(2+) signals are essential for merozoite and sporozoite invasion and egress from host hepatocytes and erythrocytes, and, in the mosquito vector, for gametocyte activation, and ookinete and sporozoite motility (By similarity). During the host liver stage, regulates the initial invasion of host hepatocytes by sporozoites by regulating sporozoite motility and microneme exocytosis. Following parasite development in the hepatocytes, required for the release of merosomes, a vesicle containing the mature merozoites (By similarity). During the asexual blood stage, required for the progression from schizont to the ring stage following merozoite invasion of host erythrocytes and for merozoite egress. Regulates merozoite egress by promoting the release of exonemes and micronemes which contain proteins essential for egress. Phosphorylates CDPK1 predominantly at the late schizont stage; phosphorylation at 'Ser-64' regulates CDPK1 protein-protein interaction and phosphorylation at 'Thr-231' may regulate CDPK1 kinase activity. In the mosquito vector, required for the initiation of gametogenesis induced by xanthurenic acid, specifically the gametocyte differentiation from the crescent-shaped form to the spherical form (By similarity). Required for the gliding motility of ookinetes to reach and penetrate the midgut epithelium by promoting Ca(2+)-mediated activation of CDPK1 and CDPK4. Also required for microneme secretion in ookinete by promoting Ca(2+)-mediated activation of CDPK3 (By similarity).</text>
</comment>
<comment type="catalytic activity">
    <reaction evidence="7">
        <text>L-seryl-[protein] + ATP = O-phospho-L-seryl-[protein] + ADP + H(+)</text>
        <dbReference type="Rhea" id="RHEA:17989"/>
        <dbReference type="Rhea" id="RHEA-COMP:9863"/>
        <dbReference type="Rhea" id="RHEA-COMP:11604"/>
        <dbReference type="ChEBI" id="CHEBI:15378"/>
        <dbReference type="ChEBI" id="CHEBI:29999"/>
        <dbReference type="ChEBI" id="CHEBI:30616"/>
        <dbReference type="ChEBI" id="CHEBI:83421"/>
        <dbReference type="ChEBI" id="CHEBI:456216"/>
        <dbReference type="EC" id="2.7.11.12"/>
    </reaction>
</comment>
<comment type="catalytic activity">
    <reaction evidence="7">
        <text>L-threonyl-[protein] + ATP = O-phospho-L-threonyl-[protein] + ADP + H(+)</text>
        <dbReference type="Rhea" id="RHEA:46608"/>
        <dbReference type="Rhea" id="RHEA-COMP:11060"/>
        <dbReference type="Rhea" id="RHEA-COMP:11605"/>
        <dbReference type="ChEBI" id="CHEBI:15378"/>
        <dbReference type="ChEBI" id="CHEBI:30013"/>
        <dbReference type="ChEBI" id="CHEBI:30616"/>
        <dbReference type="ChEBI" id="CHEBI:61977"/>
        <dbReference type="ChEBI" id="CHEBI:456216"/>
        <dbReference type="EC" id="2.7.11.12"/>
    </reaction>
</comment>
<comment type="cofactor">
    <cofactor evidence="2">
        <name>Mg(2+)</name>
        <dbReference type="ChEBI" id="CHEBI:18420"/>
    </cofactor>
</comment>
<comment type="activity regulation">
    <text evidence="2">Activated by cGMP. Not activated by cAMP. cGMP binding allosterically triggers a conformational change at the alpha C-helix of cGMP-binding domain 4, which bridges the regulatory and catalytic domains, causing the capping triad, composed of Arg-484, Gln-532 and Asp-533, to form and stabilize the active conformation. The cGMP-binding domains acts cooperatively to activate PKG.</text>
</comment>
<comment type="subunit">
    <text evidence="2">Monomer.</text>
</comment>
<comment type="subcellular location">
    <subcellularLocation>
        <location evidence="2">Cytoplasm</location>
    </subcellularLocation>
    <subcellularLocation>
        <location evidence="2">Endoplasmic reticulum membrane</location>
        <topology evidence="2">Peripheral membrane protein</topology>
        <orientation evidence="2">Cytoplasmic side</orientation>
    </subcellularLocation>
    <text evidence="2">Predominantly localizes to the cytoplasm during schizogony.</text>
</comment>
<comment type="developmental stage">
    <text evidence="7">During the parasite blood stage, highly expressed at the ring stage and in gametocytes (PubMed:16325279). Low expression in trophozoites (PubMed:16325279).</text>
</comment>
<comment type="domain">
    <text evidence="2">The cNMP-binding domains 1, 2 and 4 bind preferentially cGMP. The cNMP-binding domain 4 binds cGMP with the highest affinity and is highly selective for cGMP. The cNMP-binding domain 3 does not bind cGMP but is required for cGMP-dependent catalytic activity. The cNMP-binding domains 1, 2 and 4 can bind cAMP but with less affinity.</text>
</comment>
<comment type="domain">
    <text evidence="2">The autoinhibitory segment (AIS) interacts with the active site and inhibits catalytic activity.</text>
</comment>
<comment type="PTM">
    <text evidence="2">Autophosphorylated.</text>
</comment>
<comment type="similarity">
    <text evidence="9">Belongs to the protein kinase superfamily. AGC Ser/Thr protein kinase family. cGMP subfamily.</text>
</comment>
<comment type="sequence caution" evidence="9">
    <conflict type="erroneous initiation">
        <sequence resource="EMBL-CDS" id="EWC85729"/>
    </conflict>
    <text>Truncated N-terminus.</text>
</comment>
<reference evidence="10" key="1">
    <citation type="journal article" date="2002" name="J. Biol. Chem.">
        <title>Purification and molecular characterization of cGMP-dependent protein kinase from Apicomplexan parasites. A novel chemotherapeutic target.</title>
        <authorList>
            <person name="Gurnett A."/>
            <person name="Liberator P.A."/>
            <person name="Dulski P."/>
            <person name="Salowe S.P."/>
            <person name="Donald R.G.K."/>
            <person name="Anderson J.W."/>
            <person name="Wiltsie J."/>
            <person name="Diaz-Saldana C.A."/>
            <person name="Harris G."/>
            <person name="Chang B."/>
            <person name="Darkin-Rattray S.J."/>
            <person name="Nare B."/>
            <person name="Crumley T."/>
            <person name="Blum P."/>
            <person name="Misura A."/>
            <person name="Tamas T."/>
            <person name="Sardana M."/>
            <person name="Yuan J."/>
            <person name="Biftu T."/>
            <person name="Schmatz D."/>
        </authorList>
    </citation>
    <scope>NUCLEOTIDE SEQUENCE [MRNA]</scope>
</reference>
<reference evidence="10" key="2">
    <citation type="journal article" date="2006" name="Mol. Biochem. Parasitol.">
        <title>Characterization of Plasmodium falciparum cGMP-dependent protein kinase (PfPKG): antiparasitic activity of a PKG inhibitor.</title>
        <authorList>
            <person name="Diaz C.A."/>
            <person name="Allocco J."/>
            <person name="Powles M.A."/>
            <person name="Yeung L."/>
            <person name="Donald R.G."/>
            <person name="Anderson J.W."/>
            <person name="Liberator P.A."/>
        </authorList>
    </citation>
    <scope>NUCLEOTIDE SEQUENCE [MRNA]</scope>
    <scope>FUNCTION</scope>
    <scope>CATALYTIC ACTIVITY</scope>
    <scope>DEVELOPMENTAL STAGE</scope>
</reference>
<reference evidence="12" key="3">
    <citation type="submission" date="2013-02" db="EMBL/GenBank/DDBJ databases">
        <title>The Genome Sequence of Plasmodium falciparum NF54.</title>
        <authorList>
            <consortium name="The Broad Institute Genome Sequencing Platform"/>
            <consortium name="The Broad Institute Genome Sequencing Center for Infectious Disease"/>
            <person name="Neafsey D."/>
            <person name="Cheeseman I."/>
            <person name="Volkman S."/>
            <person name="Adams J."/>
            <person name="Walker B."/>
            <person name="Young S.K."/>
            <person name="Zeng Q."/>
            <person name="Gargeya S."/>
            <person name="Fitzgerald M."/>
            <person name="Haas B."/>
            <person name="Abouelleil A."/>
            <person name="Alvarado L."/>
            <person name="Arachchi H.M."/>
            <person name="Berlin A.M."/>
            <person name="Chapman S.B."/>
            <person name="Dewar J."/>
            <person name="Goldberg J."/>
            <person name="Griggs A."/>
            <person name="Gujja S."/>
            <person name="Hansen M."/>
            <person name="Howarth C."/>
            <person name="Imamovic A."/>
            <person name="Larimer J."/>
            <person name="McCowan C."/>
            <person name="Murphy C."/>
            <person name="Neiman D."/>
            <person name="Pearson M."/>
            <person name="Priest M."/>
            <person name="Roberts A."/>
            <person name="Saif S."/>
            <person name="Shea T."/>
            <person name="Sisk P."/>
            <person name="Sykes S."/>
            <person name="Wortman J."/>
            <person name="Nusbaum C."/>
            <person name="Birren B."/>
        </authorList>
    </citation>
    <scope>NUCLEOTIDE SEQUENCE [LARGE SCALE GENOMIC DNA]</scope>
    <source>
        <strain evidence="12">NF54</strain>
    </source>
</reference>
<evidence type="ECO:0000250" key="1">
    <source>
        <dbReference type="UniProtKB" id="A0A509AKL0"/>
    </source>
</evidence>
<evidence type="ECO:0000250" key="2">
    <source>
        <dbReference type="UniProtKB" id="Q8I719"/>
    </source>
</evidence>
<evidence type="ECO:0000255" key="3">
    <source>
        <dbReference type="PROSITE-ProRule" id="PRU00060"/>
    </source>
</evidence>
<evidence type="ECO:0000255" key="4">
    <source>
        <dbReference type="PROSITE-ProRule" id="PRU00159"/>
    </source>
</evidence>
<evidence type="ECO:0000255" key="5">
    <source>
        <dbReference type="PROSITE-ProRule" id="PRU00618"/>
    </source>
</evidence>
<evidence type="ECO:0000256" key="6">
    <source>
        <dbReference type="SAM" id="MobiDB-lite"/>
    </source>
</evidence>
<evidence type="ECO:0000269" key="7">
    <source>
    </source>
</evidence>
<evidence type="ECO:0000303" key="8">
    <source>
    </source>
</evidence>
<evidence type="ECO:0000305" key="9"/>
<evidence type="ECO:0000312" key="10">
    <source>
        <dbReference type="EMBL" id="AAM22644.1"/>
    </source>
</evidence>
<evidence type="ECO:0000312" key="11">
    <source>
        <dbReference type="EMBL" id="EWC85729.1"/>
    </source>
</evidence>
<evidence type="ECO:0000312" key="12">
    <source>
        <dbReference type="Proteomes" id="UP000030673"/>
    </source>
</evidence>
<proteinExistence type="evidence at protein level"/>
<accession>W7JX98</accession>
<accession>Q8MMZ4</accession>
<gene>
    <name evidence="8" type="primary">PKG</name>
    <name evidence="11" type="ORF">PFNF54_05395</name>
</gene>
<organism evidence="12">
    <name type="scientific">Plasmodium falciparum (isolate NF54)</name>
    <dbReference type="NCBI Taxonomy" id="5843"/>
    <lineage>
        <taxon>Eukaryota</taxon>
        <taxon>Sar</taxon>
        <taxon>Alveolata</taxon>
        <taxon>Apicomplexa</taxon>
        <taxon>Aconoidasida</taxon>
        <taxon>Haemosporida</taxon>
        <taxon>Plasmodiidae</taxon>
        <taxon>Plasmodium</taxon>
        <taxon>Plasmodium (Laverania)</taxon>
    </lineage>
</organism>
<dbReference type="EC" id="2.7.11.12" evidence="7"/>
<dbReference type="EMBL" id="AF465544">
    <property type="protein sequence ID" value="AAM22644.1"/>
    <property type="molecule type" value="mRNA"/>
</dbReference>
<dbReference type="EMBL" id="KE123882">
    <property type="protein sequence ID" value="EWC85729.1"/>
    <property type="status" value="ALT_INIT"/>
    <property type="molecule type" value="Genomic_DNA"/>
</dbReference>
<dbReference type="SMR" id="W7JX98"/>
<dbReference type="BindingDB" id="W7JX98"/>
<dbReference type="ChEMBL" id="CHEMBL2169724"/>
<dbReference type="EnsemblProtists" id="EWC85729">
    <property type="protein sequence ID" value="EWC85729"/>
    <property type="gene ID" value="PFNF54_05395"/>
</dbReference>
<dbReference type="VEuPathDB" id="PlasmoDB:PF3D7_1436600"/>
<dbReference type="VEuPathDB" id="PlasmoDB:Pf7G8_140041800"/>
<dbReference type="VEuPathDB" id="PlasmoDB:PfCD01_140042000"/>
<dbReference type="VEuPathDB" id="PlasmoDB:PfDd2_140041000"/>
<dbReference type="VEuPathDB" id="PlasmoDB:PfGA01_140042100"/>
<dbReference type="VEuPathDB" id="PlasmoDB:PfGB4_140042700"/>
<dbReference type="VEuPathDB" id="PlasmoDB:PfGN01_140041900"/>
<dbReference type="VEuPathDB" id="PlasmoDB:PfHB3_140042300"/>
<dbReference type="VEuPathDB" id="PlasmoDB:PfIT_140043000"/>
<dbReference type="VEuPathDB" id="PlasmoDB:PfKE01_140041500"/>
<dbReference type="VEuPathDB" id="PlasmoDB:PfKH01_140042100"/>
<dbReference type="VEuPathDB" id="PlasmoDB:PfKH02_140042300"/>
<dbReference type="VEuPathDB" id="PlasmoDB:PfML01_140042100"/>
<dbReference type="VEuPathDB" id="PlasmoDB:PfNF54_140040400"/>
<dbReference type="VEuPathDB" id="PlasmoDB:PfSD01_140039900"/>
<dbReference type="VEuPathDB" id="PlasmoDB:PfSN01_140043800"/>
<dbReference type="VEuPathDB" id="PlasmoDB:PfTG01_140041900"/>
<dbReference type="Proteomes" id="UP000030673">
    <property type="component" value="Unassembled WGS sequence"/>
</dbReference>
<dbReference type="GO" id="GO:0005952">
    <property type="term" value="C:cAMP-dependent protein kinase complex"/>
    <property type="evidence" value="ECO:0007669"/>
    <property type="project" value="TreeGrafter"/>
</dbReference>
<dbReference type="GO" id="GO:0005789">
    <property type="term" value="C:endoplasmic reticulum membrane"/>
    <property type="evidence" value="ECO:0007669"/>
    <property type="project" value="UniProtKB-SubCell"/>
</dbReference>
<dbReference type="GO" id="GO:0005524">
    <property type="term" value="F:ATP binding"/>
    <property type="evidence" value="ECO:0007669"/>
    <property type="project" value="UniProtKB-KW"/>
</dbReference>
<dbReference type="GO" id="GO:0004691">
    <property type="term" value="F:cAMP-dependent protein kinase activity"/>
    <property type="evidence" value="ECO:0007669"/>
    <property type="project" value="TreeGrafter"/>
</dbReference>
<dbReference type="GO" id="GO:0030553">
    <property type="term" value="F:cGMP binding"/>
    <property type="evidence" value="ECO:0007669"/>
    <property type="project" value="UniProtKB-KW"/>
</dbReference>
<dbReference type="GO" id="GO:0004692">
    <property type="term" value="F:cGMP-dependent protein kinase activity"/>
    <property type="evidence" value="ECO:0000314"/>
    <property type="project" value="UniProtKB"/>
</dbReference>
<dbReference type="GO" id="GO:0046872">
    <property type="term" value="F:metal ion binding"/>
    <property type="evidence" value="ECO:0007669"/>
    <property type="project" value="UniProtKB-KW"/>
</dbReference>
<dbReference type="GO" id="GO:0006468">
    <property type="term" value="P:protein phosphorylation"/>
    <property type="evidence" value="ECO:0000314"/>
    <property type="project" value="UniProtKB"/>
</dbReference>
<dbReference type="CDD" id="cd00038">
    <property type="entry name" value="CAP_ED"/>
    <property type="match status" value="4"/>
</dbReference>
<dbReference type="CDD" id="cd05572">
    <property type="entry name" value="STKc_cGK"/>
    <property type="match status" value="1"/>
</dbReference>
<dbReference type="FunFam" id="1.10.510.10:FF:000567">
    <property type="entry name" value="cGMP-dependent protein kinase"/>
    <property type="match status" value="1"/>
</dbReference>
<dbReference type="FunFam" id="2.60.120.10:FF:000068">
    <property type="entry name" value="cGMP-dependent protein kinase"/>
    <property type="match status" value="1"/>
</dbReference>
<dbReference type="FunFam" id="2.60.120.10:FF:000091">
    <property type="entry name" value="cGMP-dependent protein kinase"/>
    <property type="match status" value="1"/>
</dbReference>
<dbReference type="FunFam" id="2.60.120.10:FF:000094">
    <property type="entry name" value="cGMP-dependent protein kinase"/>
    <property type="match status" value="1"/>
</dbReference>
<dbReference type="FunFam" id="3.30.200.20:FF:000449">
    <property type="entry name" value="cGMP-dependent protein kinase"/>
    <property type="match status" value="1"/>
</dbReference>
<dbReference type="Gene3D" id="2.60.120.10">
    <property type="entry name" value="Jelly Rolls"/>
    <property type="match status" value="4"/>
</dbReference>
<dbReference type="Gene3D" id="3.30.200.20">
    <property type="entry name" value="Phosphorylase Kinase, domain 1"/>
    <property type="match status" value="1"/>
</dbReference>
<dbReference type="Gene3D" id="1.10.510.10">
    <property type="entry name" value="Transferase(Phosphotransferase) domain 1"/>
    <property type="match status" value="1"/>
</dbReference>
<dbReference type="InterPro" id="IPR000961">
    <property type="entry name" value="AGC-kinase_C"/>
</dbReference>
<dbReference type="InterPro" id="IPR002374">
    <property type="entry name" value="cGMP_dep_kinase"/>
</dbReference>
<dbReference type="InterPro" id="IPR018488">
    <property type="entry name" value="cNMP-bd_CS"/>
</dbReference>
<dbReference type="InterPro" id="IPR000595">
    <property type="entry name" value="cNMP-bd_dom"/>
</dbReference>
<dbReference type="InterPro" id="IPR018490">
    <property type="entry name" value="cNMP-bd_dom_sf"/>
</dbReference>
<dbReference type="InterPro" id="IPR011009">
    <property type="entry name" value="Kinase-like_dom_sf"/>
</dbReference>
<dbReference type="InterPro" id="IPR000719">
    <property type="entry name" value="Prot_kinase_dom"/>
</dbReference>
<dbReference type="InterPro" id="IPR017441">
    <property type="entry name" value="Protein_kinase_ATP_BS"/>
</dbReference>
<dbReference type="InterPro" id="IPR014710">
    <property type="entry name" value="RmlC-like_jellyroll"/>
</dbReference>
<dbReference type="InterPro" id="IPR008271">
    <property type="entry name" value="Ser/Thr_kinase_AS"/>
</dbReference>
<dbReference type="InterPro" id="IPR035014">
    <property type="entry name" value="STKc_cGK"/>
</dbReference>
<dbReference type="PANTHER" id="PTHR24353:SF37">
    <property type="entry name" value="CAMP-DEPENDENT PROTEIN KINASE CATALYTIC SUBUNIT PRKX"/>
    <property type="match status" value="1"/>
</dbReference>
<dbReference type="PANTHER" id="PTHR24353">
    <property type="entry name" value="CYCLIC NUCLEOTIDE-DEPENDENT PROTEIN KINASE"/>
    <property type="match status" value="1"/>
</dbReference>
<dbReference type="Pfam" id="PF00027">
    <property type="entry name" value="cNMP_binding"/>
    <property type="match status" value="3"/>
</dbReference>
<dbReference type="Pfam" id="PF00069">
    <property type="entry name" value="Pkinase"/>
    <property type="match status" value="1"/>
</dbReference>
<dbReference type="PIRSF" id="PIRSF000559">
    <property type="entry name" value="cGMP-dep_kinase"/>
    <property type="match status" value="1"/>
</dbReference>
<dbReference type="PRINTS" id="PR00103">
    <property type="entry name" value="CAMPKINASE"/>
</dbReference>
<dbReference type="SMART" id="SM00100">
    <property type="entry name" value="cNMP"/>
    <property type="match status" value="4"/>
</dbReference>
<dbReference type="SMART" id="SM00220">
    <property type="entry name" value="S_TKc"/>
    <property type="match status" value="1"/>
</dbReference>
<dbReference type="SUPFAM" id="SSF51206">
    <property type="entry name" value="cAMP-binding domain-like"/>
    <property type="match status" value="4"/>
</dbReference>
<dbReference type="SUPFAM" id="SSF56112">
    <property type="entry name" value="Protein kinase-like (PK-like)"/>
    <property type="match status" value="1"/>
</dbReference>
<dbReference type="PROSITE" id="PS51285">
    <property type="entry name" value="AGC_KINASE_CTER"/>
    <property type="match status" value="1"/>
</dbReference>
<dbReference type="PROSITE" id="PS00888">
    <property type="entry name" value="CNMP_BINDING_1"/>
    <property type="match status" value="3"/>
</dbReference>
<dbReference type="PROSITE" id="PS00889">
    <property type="entry name" value="CNMP_BINDING_2"/>
    <property type="match status" value="3"/>
</dbReference>
<dbReference type="PROSITE" id="PS50042">
    <property type="entry name" value="CNMP_BINDING_3"/>
    <property type="match status" value="4"/>
</dbReference>
<dbReference type="PROSITE" id="PS00107">
    <property type="entry name" value="PROTEIN_KINASE_ATP"/>
    <property type="match status" value="1"/>
</dbReference>
<dbReference type="PROSITE" id="PS50011">
    <property type="entry name" value="PROTEIN_KINASE_DOM"/>
    <property type="match status" value="1"/>
</dbReference>
<dbReference type="PROSITE" id="PS00108">
    <property type="entry name" value="PROTEIN_KINASE_ST"/>
    <property type="match status" value="1"/>
</dbReference>
<keyword id="KW-0067">ATP-binding</keyword>
<keyword id="KW-0140">cGMP</keyword>
<keyword id="KW-0142">cGMP-binding</keyword>
<keyword id="KW-0963">Cytoplasm</keyword>
<keyword id="KW-0256">Endoplasmic reticulum</keyword>
<keyword id="KW-0418">Kinase</keyword>
<keyword id="KW-0460">Magnesium</keyword>
<keyword id="KW-0472">Membrane</keyword>
<keyword id="KW-0479">Metal-binding</keyword>
<keyword id="KW-0547">Nucleotide-binding</keyword>
<keyword id="KW-1185">Reference proteome</keyword>
<keyword id="KW-0723">Serine/threonine-protein kinase</keyword>
<keyword id="KW-0808">Transferase</keyword>
<feature type="chain" id="PRO_0000451911" description="cGMP-dependent protein kinase">
    <location>
        <begin position="1"/>
        <end position="853"/>
    </location>
</feature>
<feature type="domain" description="Protein kinase" evidence="4">
    <location>
        <begin position="541"/>
        <end position="798"/>
    </location>
</feature>
<feature type="domain" description="AGC-kinase C-terminal" evidence="5">
    <location>
        <begin position="799"/>
        <end position="853"/>
    </location>
</feature>
<feature type="region of interest" description="Autoinhibitory segment" evidence="2">
    <location>
        <begin position="1"/>
        <end position="29"/>
    </location>
</feature>
<feature type="region of interest" description="cNMP-binding domain 1" evidence="3">
    <location>
        <begin position="58"/>
        <end position="173"/>
    </location>
</feature>
<feature type="region of interest" description="cNMP-binding domain 2" evidence="3">
    <location>
        <begin position="176"/>
        <end position="275"/>
    </location>
</feature>
<feature type="region of interest" description="cNMP-binding domain 3" evidence="3">
    <location>
        <begin position="295"/>
        <end position="398"/>
    </location>
</feature>
<feature type="region of interest" description="cNMP-binding domain 4" evidence="3">
    <location>
        <begin position="418"/>
        <end position="517"/>
    </location>
</feature>
<feature type="region of interest" description="Disordered" evidence="6">
    <location>
        <begin position="827"/>
        <end position="853"/>
    </location>
</feature>
<feature type="compositionally biased region" description="Acidic residues" evidence="6">
    <location>
        <begin position="832"/>
        <end position="853"/>
    </location>
</feature>
<feature type="active site" description="Proton acceptor" evidence="4">
    <location>
        <position position="664"/>
    </location>
</feature>
<feature type="binding site" evidence="2">
    <location>
        <position position="113"/>
    </location>
    <ligand>
        <name>3',5'-cyclic GMP</name>
        <dbReference type="ChEBI" id="CHEBI:57746"/>
        <label>1</label>
        <note>allosteric activator</note>
    </ligand>
</feature>
<feature type="binding site" evidence="2">
    <location>
        <position position="122"/>
    </location>
    <ligand>
        <name>3',5'-cyclic GMP</name>
        <dbReference type="ChEBI" id="CHEBI:57746"/>
        <label>1</label>
        <note>allosteric activator</note>
    </ligand>
</feature>
<feature type="binding site" evidence="2">
    <location>
        <position position="123"/>
    </location>
    <ligand>
        <name>3',5'-cyclic GMP</name>
        <dbReference type="ChEBI" id="CHEBI:57746"/>
        <label>1</label>
        <note>allosteric activator</note>
    </ligand>
</feature>
<feature type="binding site" evidence="2">
    <location>
        <position position="125"/>
    </location>
    <ligand>
        <name>3',5'-cyclic GMP</name>
        <dbReference type="ChEBI" id="CHEBI:57746"/>
        <label>1</label>
        <note>allosteric activator</note>
    </ligand>
</feature>
<feature type="binding site" evidence="2">
    <location>
        <position position="132"/>
    </location>
    <ligand>
        <name>3',5'-cyclic GMP</name>
        <dbReference type="ChEBI" id="CHEBI:57746"/>
        <label>1</label>
        <note>allosteric activator</note>
    </ligand>
</feature>
<feature type="binding site" evidence="2">
    <location>
        <position position="133"/>
    </location>
    <ligand>
        <name>3',5'-cyclic GMP</name>
        <dbReference type="ChEBI" id="CHEBI:57746"/>
        <label>1</label>
        <note>allosteric activator</note>
    </ligand>
</feature>
<feature type="binding site" evidence="2">
    <location>
        <position position="473"/>
    </location>
    <ligand>
        <name>3',5'-cyclic GMP</name>
        <dbReference type="ChEBI" id="CHEBI:57746"/>
        <label>2</label>
        <note>allosteric activator</note>
    </ligand>
</feature>
<feature type="binding site" evidence="2">
    <location>
        <position position="482"/>
    </location>
    <ligand>
        <name>3',5'-cyclic GMP</name>
        <dbReference type="ChEBI" id="CHEBI:57746"/>
        <label>2</label>
        <note>allosteric activator</note>
    </ligand>
</feature>
<feature type="binding site" evidence="2">
    <location>
        <position position="483"/>
    </location>
    <ligand>
        <name>3',5'-cyclic GMP</name>
        <dbReference type="ChEBI" id="CHEBI:57746"/>
        <label>2</label>
        <note>allosteric activator</note>
    </ligand>
</feature>
<feature type="binding site" evidence="2">
    <location>
        <position position="485"/>
    </location>
    <ligand>
        <name>3',5'-cyclic GMP</name>
        <dbReference type="ChEBI" id="CHEBI:57746"/>
        <label>2</label>
        <note>allosteric activator</note>
    </ligand>
</feature>
<feature type="binding site" evidence="2">
    <location>
        <position position="492"/>
    </location>
    <ligand>
        <name>3',5'-cyclic GMP</name>
        <dbReference type="ChEBI" id="CHEBI:57746"/>
        <label>2</label>
        <note>allosteric activator</note>
    </ligand>
</feature>
<feature type="binding site" evidence="2">
    <location>
        <position position="493"/>
    </location>
    <ligand>
        <name>3',5'-cyclic GMP</name>
        <dbReference type="ChEBI" id="CHEBI:57746"/>
        <label>2</label>
        <note>allosteric activator</note>
    </ligand>
</feature>
<feature type="binding site" evidence="4">
    <location>
        <begin position="547"/>
        <end position="555"/>
    </location>
    <ligand>
        <name>ATP</name>
        <dbReference type="ChEBI" id="CHEBI:30616"/>
    </ligand>
</feature>
<feature type="binding site" evidence="4">
    <location>
        <position position="570"/>
    </location>
    <ligand>
        <name>ATP</name>
        <dbReference type="ChEBI" id="CHEBI:30616"/>
    </ligand>
</feature>
<feature type="site" description="Part of a catalytic triad required for cGMP binding and cGMP-dependent kinase activity" evidence="2">
    <location>
        <position position="484"/>
    </location>
</feature>
<feature type="site" description="Part of a catalytic triad required for cGMP binding and cGMP-dependent kinase activity" evidence="2">
    <location>
        <position position="532"/>
    </location>
</feature>
<feature type="site" description="Part of a catalytic triad required for cGMP binding and cGMP-dependent kinase activity" evidence="2">
    <location>
        <position position="533"/>
    </location>
</feature>
<name>KGP_PLAFO</name>
<sequence length="853" mass="97694">MEEDDNLKKGNERNKKKAIFSNDDFTGEDSLMEDHLELREKLSEDIDMIKTSLKNNLVCSTLNDNEILTLSNYMQFFVFKSGNLVIKQGEKGSYFFIINSGKFDVYVNDKKVKTMGKGSSFGEAALIHNTQRSATIIAETDGTLWGVQRSTFRATLKQLSNRNFNENRTFIDSVSVFDMLTEAQKNMITNACVIQNFKSGETIVKQGDYGDVLYILKEGKATVYINDEEIRVLEKGSYFGERALLYDEPRSATIIAKEPTACASICRKLLNIVLGNLQVVLFRNIMTEALQQSEIFKQFSGDQLNDLADTAIVRDYPANYNILHKDKVKSVKYIIVLEGKVELFLDDTSIGILSRGMSFGDQYVLNQKQPFKHTIKSLEVCKIALITETCLADCLGNNNIDASIDYNNKKSIIKKMYIFRYLTDKQCNLLIEAFRTTRYEEGDYIIQEGEVGSRFYIIKNGEVEIVKNKKRLRTLGKNDYFGERALLYDEPRTASVISKVNNVECWFVDKSVFLQIIQGPMLAHLEERIKMQDTKVEMDELETERIIGRGTFGTVKLVHHKPTKIRYALKCVSKRSIINLNQQNNIKLEREITAENDHPFIIRLVRTFKDSKYFYFLTELVTGGELYDAIRKLGLLSKSQAQFYLGSIILAIEYLHERNIVYRDLKPENILLDKQGYVKLIDFGCAKKVQGRAYTLVGTPHYMAPEVILGKGYGCTVDIWALGICLYEFICGPLPFGNDEEDQLEIFRDILTGQLTFPDYVTDTDSINLMKRLLCRLPQGRIGCSINGFKDIKDHPFFSNFNWDKLAGRLLDPPLVSKSETYAEDIDIKQIEEEDAEDDEEPLNDEDNWDIDF</sequence>
<protein>
    <recommendedName>
        <fullName evidence="8">cGMP-dependent protein kinase</fullName>
        <ecNumber evidence="7">2.7.11.12</ecNumber>
    </recommendedName>
</protein>